<feature type="chain" id="PRO_0000041114" description="Outer capsid protein VP4" evidence="1">
    <location>
        <begin position="1"/>
        <end position="776"/>
    </location>
</feature>
<feature type="chain" id="PRO_0000041115" description="Outer capsid protein VP8*" evidence="1">
    <location>
        <begin position="1"/>
        <end position="231"/>
    </location>
</feature>
<feature type="chain" id="PRO_0000041116" description="Outer capsid protein VP5*" evidence="1">
    <location>
        <begin position="248"/>
        <end position="776"/>
    </location>
</feature>
<feature type="region of interest" description="Spike head" evidence="1">
    <location>
        <begin position="65"/>
        <end position="224"/>
    </location>
</feature>
<feature type="region of interest" description="Spike body and stalk (antigen domain)" evidence="1">
    <location>
        <begin position="248"/>
        <end position="479"/>
    </location>
</feature>
<feature type="region of interest" description="Hydrophobic; possible role in virus entry into host cell" evidence="1">
    <location>
        <begin position="389"/>
        <end position="409"/>
    </location>
</feature>
<feature type="region of interest" description="Spike foot" evidence="1">
    <location>
        <begin position="510"/>
        <end position="776"/>
    </location>
</feature>
<feature type="coiled-coil region" evidence="1">
    <location>
        <begin position="484"/>
        <end position="511"/>
    </location>
</feature>
<feature type="short sequence motif" description="DGE motif; interaction with ITGA2/ITGB1 heterodimer" evidence="1">
    <location>
        <begin position="308"/>
        <end position="310"/>
    </location>
</feature>
<feature type="short sequence motif" description="YGL motif; interaction with ITGA4" evidence="1">
    <location>
        <begin position="448"/>
        <end position="450"/>
    </location>
</feature>
<feature type="short sequence motif" description="KID motif; interaction with HSPA8" evidence="1">
    <location>
        <begin position="644"/>
        <end position="646"/>
    </location>
</feature>
<feature type="site" description="Binding to sialic acid" evidence="1">
    <location>
        <position position="101"/>
    </location>
</feature>
<feature type="site" description="Binding to sialic acid" evidence="1">
    <location>
        <position position="190"/>
    </location>
</feature>
<feature type="site" description="Cleavage" evidence="1">
    <location>
        <begin position="231"/>
        <end position="232"/>
    </location>
</feature>
<feature type="site" description="Cleavage" evidence="1">
    <location>
        <begin position="241"/>
        <end position="242"/>
    </location>
</feature>
<feature type="site" description="Cleavage; associated with enhancement of infectivity" evidence="1">
    <location>
        <begin position="247"/>
        <end position="248"/>
    </location>
</feature>
<feature type="disulfide bond" evidence="1">
    <location>
        <begin position="203"/>
        <end position="216"/>
    </location>
</feature>
<feature type="disulfide bond" evidence="1">
    <location>
        <begin position="318"/>
        <end position="380"/>
    </location>
</feature>
<comment type="function">
    <molecule>Outer capsid protein VP4</molecule>
    <text evidence="1">Spike-forming protein that mediates virion attachment to the host epithelial cell receptors and plays a major role in cell penetration, determination of host range restriction and virulence. Rotavirus attachment and entry into the host cell probably involves multiple sequential contacts between the outer capsid proteins VP4 and VP7, and the cell receptors. It is subsequently lost, together with VP7, following virus entry into the host cell. Following entry into the host cell, low intracellular or intravesicular Ca(2+) concentration probably causes the calcium-stabilized VP7 trimers to dissociate from the virion. This step is probably necessary for the membrane-disrupting entry step and the release of VP4, which is locked onto the virion by VP7. During the virus exit from the host cell, VP4 seems to be required to target the newly formed virions to the host cell lipid rafts.</text>
</comment>
<comment type="function">
    <molecule>Outer capsid protein VP5*</molecule>
    <text evidence="1">Forms the spike 'foot' and 'body' and acts as a membrane permeabilization protein that mediates release of viral particles from endosomal compartments into the cytoplasm. During entry, the part of VP5* that protrudes from the virus folds back on itself and reorganizes from a local dimer to a trimer. This reorganization may be linked to membrane penetration by exposing VP5* hydrophobic region. In integrin-dependent strains, VP5* targets the integrin heterodimer ITGA2/ITGB1 for cell attachment.</text>
</comment>
<comment type="function">
    <molecule>Outer capsid protein VP8*</molecule>
    <text evidence="1">Forms the head of the spikes and mediates the recognition of specific host cell surface glycans. It is the viral hemagglutinin and an important target of neutralizing antibodies. In sialic acid-dependent strains, VP8* binds to host cell sialic acid, most probably a ganglioside, providing the initial contact. In some other strains, VP8* mediates the attachment to histo-blood group antigens (HBGAs) for viral entry.</text>
</comment>
<comment type="subunit">
    <molecule>Outer capsid protein VP4</molecule>
    <text evidence="1">Homotrimer. VP4 adopts a dimeric appearance above the capsid surface, while forming a trimeric base anchored inside the capsid layer. Only hints of the third molecule are observed above the capsid surface. It probably performs a series of molecular rearrangements during viral entry. Prior to trypsin cleavage, it is flexible. The priming trypsin cleavage triggers its rearrangement into rigid spikes with approximate two-fold symmetry of their protruding parts. After an unknown second triggering event, cleaved VP4 may undergo another rearrangement, in which two VP5* subunits fold back on themselves and join a third subunit to form a tightly associated trimer, shaped like a folded umbrella. Interacts with VP6. Interacts with VP7.</text>
</comment>
<comment type="subunit">
    <molecule>Outer capsid protein VP5*</molecule>
    <text evidence="1 2 3">Homotrimer. The trimer is coiled-coil stabilized by its C-terminus, however, its N-terminus, known as antigen domain or 'body', seems to be flexible allowing it to self-associate either as a dimer or a trimer (By similarity). Interacts with host ITGA2 (via ITAG2 I-domain); this interaction occurs when ITGA2 is part of the integrin heterodimer ITGA2/ITGB1 (PubMed:12941907). Interacts with host integrin heterodimer ITGA4/ITGB1 and ITGA4/ITGB7 (PubMed:16298987).</text>
</comment>
<comment type="subcellular location">
    <molecule>Outer capsid protein VP4</molecule>
    <subcellularLocation>
        <location evidence="1">Virion</location>
    </subcellularLocation>
    <subcellularLocation>
        <location evidence="1">Host rough endoplasmic reticulum</location>
    </subcellularLocation>
    <subcellularLocation>
        <location evidence="1">Host cell membrane</location>
    </subcellularLocation>
    <subcellularLocation>
        <location evidence="1">Host cytoplasm</location>
        <location evidence="1">Host cytoskeleton</location>
    </subcellularLocation>
    <subcellularLocation>
        <location evidence="1">Host endoplasmic reticulum-Golgi intermediate compartment</location>
    </subcellularLocation>
    <text evidence="1">The outer layer contains 180 copies of VP4, grouped as 60 dimers. Immature double-layered particles assembled in the cytoplasm bud across the membrane of the endoplasmic reticulum, acquiring during this process a transient lipid membrane that is modified with the ER resident viral glycoproteins NSP4 and VP7; these enveloped particles also contain VP4. As the particles move towards the interior of the ER cisternae, the transient lipid membrane and the non-structural protein NSP4 are lost, while the virus surface proteins VP4 and VP7 rearrange to form the outermost virus protein layer, yielding mature infectious triple-layered particles. VP4 also seems to associate with lipid rafts of the host cell membrane probably for the exit of the virus from the infected cell by an alternate pathway.</text>
</comment>
<comment type="subcellular location">
    <molecule>Outer capsid protein VP8*</molecule>
    <subcellularLocation>
        <location evidence="1">Virion</location>
    </subcellularLocation>
    <text evidence="1">Outer capsid protein.</text>
</comment>
<comment type="subcellular location">
    <molecule>Outer capsid protein VP5*</molecule>
    <subcellularLocation>
        <location evidence="1">Virion</location>
    </subcellularLocation>
    <text evidence="1">Outer capsid protein.</text>
</comment>
<comment type="domain">
    <molecule>Outer capsid protein VP4</molecule>
    <text evidence="1">The VP4 spike is divided into a foot, a stalk and body, and a head.</text>
</comment>
<comment type="PTM">
    <molecule>Outer capsid protein VP4</molecule>
    <text evidence="1">Proteolytic cleavage by trypsin results in activation of VP4 functions and greatly increases infectivity. The penetration into the host cell is dependent on trypsin treatment of VP4. It produces two peptides, VP5* and VP8* that remain associated with the virion. Cleavage of VP4 by trypsin probably occurs in vivo in the lumen of the intestine prior to infection of enterocytes. Trypsin seems to be incorporated into the three-layered viral particles but remains inactive as long as the viral outer capsid is intact and would only be activated upon the solubilization of the latter.</text>
</comment>
<comment type="miscellaneous">
    <text evidence="1">In group A rotaviruses, VP4 defines the P serotype.</text>
</comment>
<comment type="miscellaneous">
    <text evidence="1">Some rotavirus strains are neuraminidase-sensitive and require sialic acid to attach to the cell surface. Some rotavirus strains are integrin-dependent. Some rotavirus strains depend on ganglioside for their entry into the host cell. Hsp70 also seems to be involved in the entry of some strains.</text>
</comment>
<comment type="miscellaneous">
    <text evidence="1">This strain probably uses sialic acid to attach to the host cell.</text>
</comment>
<comment type="similarity">
    <text evidence="1">Belongs to the rotavirus VP4 family.</text>
</comment>
<organism>
    <name type="scientific">Rotavirus A (strain RVA/SA11-Both/G3P5B[2])</name>
    <name type="common">RV-A</name>
    <name type="synonym">Simian Agent 11 (strain Both)</name>
    <dbReference type="NCBI Taxonomy" id="37137"/>
    <lineage>
        <taxon>Viruses</taxon>
        <taxon>Riboviria</taxon>
        <taxon>Orthornavirae</taxon>
        <taxon>Duplornaviricota</taxon>
        <taxon>Resentoviricetes</taxon>
        <taxon>Reovirales</taxon>
        <taxon>Sedoreoviridae</taxon>
        <taxon>Rotavirus</taxon>
        <taxon>Rotavirus A</taxon>
    </lineage>
</organism>
<proteinExistence type="evidence at protein level"/>
<keyword id="KW-0167">Capsid protein</keyword>
<keyword id="KW-0175">Coiled coil</keyword>
<keyword id="KW-1015">Disulfide bond</keyword>
<keyword id="KW-0348">Hemagglutinin</keyword>
<keyword id="KW-1032">Host cell membrane</keyword>
<keyword id="KW-1035">Host cytoplasm</keyword>
<keyword id="KW-1037">Host cytoskeleton</keyword>
<keyword id="KW-1038">Host endoplasmic reticulum</keyword>
<keyword id="KW-1043">Host membrane</keyword>
<keyword id="KW-0945">Host-virus interaction</keyword>
<keyword id="KW-0472">Membrane</keyword>
<keyword id="KW-1152">Outer capsid protein</keyword>
<keyword id="KW-1185">Reference proteome</keyword>
<keyword id="KW-1161">Viral attachment to host cell</keyword>
<keyword id="KW-1162">Viral penetration into host cytoplasm</keyword>
<keyword id="KW-1173">Viral penetration via permeabilization of host membrane</keyword>
<keyword id="KW-0946">Virion</keyword>
<keyword id="KW-1160">Virus entry into host cell</keyword>
<protein>
    <recommendedName>
        <fullName evidence="1">Outer capsid protein VP4</fullName>
    </recommendedName>
    <alternativeName>
        <fullName evidence="1">Hemagglutinin</fullName>
    </alternativeName>
    <component>
        <recommendedName>
            <fullName evidence="1">Outer capsid protein VP8*</fullName>
        </recommendedName>
    </component>
    <component>
        <recommendedName>
            <fullName evidence="1">Outer capsid protein VP5*</fullName>
        </recommendedName>
    </component>
</protein>
<evidence type="ECO:0000255" key="1">
    <source>
        <dbReference type="HAMAP-Rule" id="MF_04132"/>
    </source>
</evidence>
<evidence type="ECO:0000269" key="2">
    <source>
    </source>
</evidence>
<evidence type="ECO:0000269" key="3">
    <source>
    </source>
</evidence>
<dbReference type="EMBL" id="X14204">
    <property type="protein sequence ID" value="CAA32420.1"/>
    <property type="molecule type" value="mRNA"/>
</dbReference>
<dbReference type="PIR" id="S03611">
    <property type="entry name" value="S03611"/>
</dbReference>
<dbReference type="SMR" id="P12976"/>
<dbReference type="Proteomes" id="UP000007180">
    <property type="component" value="Genome"/>
</dbReference>
<dbReference type="GO" id="GO:0044172">
    <property type="term" value="C:host cell endoplasmic reticulum-Golgi intermediate compartment"/>
    <property type="evidence" value="ECO:0007669"/>
    <property type="project" value="UniProtKB-SubCell"/>
</dbReference>
<dbReference type="GO" id="GO:0020002">
    <property type="term" value="C:host cell plasma membrane"/>
    <property type="evidence" value="ECO:0007669"/>
    <property type="project" value="UniProtKB-SubCell"/>
</dbReference>
<dbReference type="GO" id="GO:0044168">
    <property type="term" value="C:host cell rough endoplasmic reticulum"/>
    <property type="evidence" value="ECO:0007669"/>
    <property type="project" value="UniProtKB-SubCell"/>
</dbReference>
<dbReference type="GO" id="GO:0044163">
    <property type="term" value="C:host cytoskeleton"/>
    <property type="evidence" value="ECO:0007669"/>
    <property type="project" value="UniProtKB-SubCell"/>
</dbReference>
<dbReference type="GO" id="GO:0016020">
    <property type="term" value="C:membrane"/>
    <property type="evidence" value="ECO:0007669"/>
    <property type="project" value="UniProtKB-KW"/>
</dbReference>
<dbReference type="GO" id="GO:0039624">
    <property type="term" value="C:viral outer capsid"/>
    <property type="evidence" value="ECO:0007669"/>
    <property type="project" value="UniProtKB-UniRule"/>
</dbReference>
<dbReference type="GO" id="GO:0039665">
    <property type="term" value="P:permeabilization of host organelle membrane involved in viral entry into host cell"/>
    <property type="evidence" value="ECO:0007669"/>
    <property type="project" value="UniProtKB-UniRule"/>
</dbReference>
<dbReference type="GO" id="GO:0019062">
    <property type="term" value="P:virion attachment to host cell"/>
    <property type="evidence" value="ECO:0007669"/>
    <property type="project" value="UniProtKB-UniRule"/>
</dbReference>
<dbReference type="Gene3D" id="1.20.5.170">
    <property type="match status" value="1"/>
</dbReference>
<dbReference type="Gene3D" id="2.60.120.200">
    <property type="match status" value="1"/>
</dbReference>
<dbReference type="HAMAP" id="MF_04132">
    <property type="entry name" value="Rota_A_VP4"/>
    <property type="match status" value="1"/>
</dbReference>
<dbReference type="HAMAP" id="MF_04125">
    <property type="entry name" value="Rota_VP4"/>
    <property type="match status" value="1"/>
</dbReference>
<dbReference type="InterPro" id="IPR013320">
    <property type="entry name" value="ConA-like_dom_sf"/>
</dbReference>
<dbReference type="InterPro" id="IPR042546">
    <property type="entry name" value="Rota_A_VP4"/>
</dbReference>
<dbReference type="InterPro" id="IPR035330">
    <property type="entry name" value="Rota_VP4_MID"/>
</dbReference>
<dbReference type="InterPro" id="IPR038017">
    <property type="entry name" value="Rota_VP4_MID_sf"/>
</dbReference>
<dbReference type="InterPro" id="IPR000416">
    <property type="entry name" value="VP4_concanavalin-like"/>
</dbReference>
<dbReference type="InterPro" id="IPR035329">
    <property type="entry name" value="VP4_helical"/>
</dbReference>
<dbReference type="Pfam" id="PF17477">
    <property type="entry name" value="Rota_VP4_MID"/>
    <property type="match status" value="1"/>
</dbReference>
<dbReference type="Pfam" id="PF00426">
    <property type="entry name" value="VP4_haemagglut"/>
    <property type="match status" value="1"/>
</dbReference>
<dbReference type="Pfam" id="PF17478">
    <property type="entry name" value="VP4_helical"/>
    <property type="match status" value="1"/>
</dbReference>
<dbReference type="SUPFAM" id="SSF49899">
    <property type="entry name" value="Concanavalin A-like lectins/glucanases"/>
    <property type="match status" value="1"/>
</dbReference>
<dbReference type="SUPFAM" id="SSF111379">
    <property type="entry name" value="VP4 membrane interaction domain"/>
    <property type="match status" value="1"/>
</dbReference>
<reference key="1">
    <citation type="journal article" date="1989" name="Nucleic Acids Res.">
        <title>Complete nucleotide sequence of the simian rotavirus SA11 VP4 gene.</title>
        <authorList>
            <person name="Mitchell D.B."/>
            <person name="Both G.W."/>
        </authorList>
    </citation>
    <scope>NUCLEOTIDE SEQUENCE [MRNA]</scope>
</reference>
<reference key="2">
    <citation type="journal article" date="2003" name="J. Virol.">
        <title>Integrin-using rotaviruses bind alpha2beta1 integrin alpha2 I domain via VP4 DGE sequence and recognize alphaXbeta2 and alphaVbeta3 by using VP7 during cell entry.</title>
        <authorList>
            <person name="Graham K.L."/>
            <person name="Halasz P."/>
            <person name="Tan Y."/>
            <person name="Hewish M.J."/>
            <person name="Takada Y."/>
            <person name="Mackow E.R."/>
            <person name="Robinson M.K."/>
            <person name="Coulson B.S."/>
        </authorList>
    </citation>
    <scope>INTERACTION WITH HUMAN INTEGRIN ITGA2 (OUTER CAPSID VP5*)</scope>
</reference>
<reference key="3">
    <citation type="journal article" date="2005" name="J. Gen. Virol.">
        <title>Rotaviruses interact with alpha4beta7 and alpha4beta1 integrins by binding the same integrin domains as natural ligands.</title>
        <authorList>
            <person name="Graham K.L."/>
            <person name="Fleming F.E."/>
            <person name="Halasz P."/>
            <person name="Hewish M.J."/>
            <person name="Nagesha H.S."/>
            <person name="Holmes I.H."/>
            <person name="Takada Y."/>
            <person name="Coulson B.S."/>
        </authorList>
    </citation>
    <scope>INTERACTION WITH HUMAN INTEGRIN HETERODIMER ITGA4/ITGB1 (OUTER CAPSID VP5*)</scope>
    <scope>INTERACTION WITH HUMAN INTEGRIN HETERODIMER ITGA4/ITGB7 (OUTER CAPSID VP5*)</scope>
</reference>
<accession>P12976</accession>
<organismHost>
    <name type="scientific">Macaca mulatta</name>
    <name type="common">Rhesus macaque</name>
    <dbReference type="NCBI Taxonomy" id="9544"/>
</organismHost>
<name>VP4_ROTS1</name>
<sequence length="776" mass="86775">MASLIYRQLLTNSYTVDLSDEIQEIGSTKSQNVTINPGPFAQTGYAPVNWGPGEINDSTTVEPLLDGPYQPTTFNPPVDYWMLLAPTTPGVIVEGTNNTDRWLATILIEPNVQSENRTYTIFGIQEQLTVSNTSQDQWKFIDVVKTTANGSIGQYGPLLSSPKLYAVMKHNEKLYTYEGQTPNARTAHYSTTNYDSVNMTAFCDFYIIPRSEESKCTEYINNGLPPIQNTRNVVPLSLTARDVIHYRAQANEDIVISKTSLWKEMQYNRDITIRFKFANTIIKSGGLGYKWSEISFKPANYQYTYTRDGEEVTAHTTCSVNGVNDFSFNGGYLPTDFVVSKFEVIKENSYVYIDYWDDSQAFRNVVYVRSLAANLNSVMCTGGSYNFSLPVGQWPVLTGGAVSLHSAGVTLSTQFTDFVSLNSLRFRFRLAVEEPHFKLTRTRLDRLYGLPAADPNNGKEYYEIAGRFSLISLVPSNDDYQTPIANSVTVRQDLERQLGELREEFNALSQEIAMSQLIDLALLPLDMFSMFSGIKSTIDAAKSMATNVMKKFKKSGLANSVSTLTDSLSDAASSISRGSSIRSIGSSASAWTDVSTQITDISSSVSSVSTQTSTISRRLRLKEMATQTEGMNFDDISAAVLKTKIDKSTQISPNTIPDIVTEASEKFIPNRAYRVINNDDVFEAGIDGKFFAYKVDTFEEIPFDVQKFADLVTDSPVISAIIDFKTLKNLNDNYGITKQQAFNLLRSDPRVLREFINQDNPIIRNRIEQLIMQCRL</sequence>